<comment type="function">
    <text evidence="1">Part of the phosphoribosylformylglycinamidine synthase complex involved in the purines biosynthetic pathway. Catalyzes the ATP-dependent conversion of formylglycinamide ribonucleotide (FGAR) and glutamine to yield formylglycinamidine ribonucleotide (FGAM) and glutamate. The FGAM synthase complex is composed of three subunits. PurQ produces an ammonia molecule by converting glutamine to glutamate. PurL transfers the ammonia molecule to FGAR to form FGAM in an ATP-dependent manner. PurS interacts with PurQ and PurL and is thought to assist in the transfer of the ammonia molecule from PurQ to PurL.</text>
</comment>
<comment type="catalytic activity">
    <reaction evidence="1">
        <text>N(2)-formyl-N(1)-(5-phospho-beta-D-ribosyl)glycinamide + L-glutamine + ATP + H2O = 2-formamido-N(1)-(5-O-phospho-beta-D-ribosyl)acetamidine + L-glutamate + ADP + phosphate + H(+)</text>
        <dbReference type="Rhea" id="RHEA:17129"/>
        <dbReference type="ChEBI" id="CHEBI:15377"/>
        <dbReference type="ChEBI" id="CHEBI:15378"/>
        <dbReference type="ChEBI" id="CHEBI:29985"/>
        <dbReference type="ChEBI" id="CHEBI:30616"/>
        <dbReference type="ChEBI" id="CHEBI:43474"/>
        <dbReference type="ChEBI" id="CHEBI:58359"/>
        <dbReference type="ChEBI" id="CHEBI:147286"/>
        <dbReference type="ChEBI" id="CHEBI:147287"/>
        <dbReference type="ChEBI" id="CHEBI:456216"/>
        <dbReference type="EC" id="6.3.5.3"/>
    </reaction>
</comment>
<comment type="pathway">
    <text evidence="1">Purine metabolism; IMP biosynthesis via de novo pathway; 5-amino-1-(5-phospho-D-ribosyl)imidazole from N(2)-formyl-N(1)-(5-phospho-D-ribosyl)glycinamide: step 1/2.</text>
</comment>
<comment type="subunit">
    <text evidence="1">Monomer. Part of the FGAM synthase complex composed of 1 PurL, 1 PurQ and 2 PurS subunits.</text>
</comment>
<comment type="subcellular location">
    <subcellularLocation>
        <location evidence="1">Cytoplasm</location>
    </subcellularLocation>
</comment>
<comment type="similarity">
    <text evidence="1">Belongs to the FGAMS family.</text>
</comment>
<protein>
    <recommendedName>
        <fullName evidence="1">Phosphoribosylformylglycinamidine synthase subunit PurL</fullName>
        <shortName evidence="1">FGAM synthase</shortName>
        <ecNumber evidence="1">6.3.5.3</ecNumber>
    </recommendedName>
    <alternativeName>
        <fullName evidence="1">Formylglycinamide ribonucleotide amidotransferase subunit II</fullName>
        <shortName evidence="1">FGAR amidotransferase II</shortName>
        <shortName evidence="1">FGAR-AT II</shortName>
    </alternativeName>
    <alternativeName>
        <fullName evidence="1">Glutamine amidotransferase PurL</fullName>
    </alternativeName>
    <alternativeName>
        <fullName evidence="1">Phosphoribosylformylglycinamidine synthase subunit II</fullName>
    </alternativeName>
</protein>
<accession>Q9RXT4</accession>
<proteinExistence type="inferred from homology"/>
<dbReference type="EC" id="6.3.5.3" evidence="1"/>
<dbReference type="EMBL" id="AE000513">
    <property type="protein sequence ID" value="AAF09808.1"/>
    <property type="molecule type" value="Genomic_DNA"/>
</dbReference>
<dbReference type="PIR" id="C75545">
    <property type="entry name" value="C75545"/>
</dbReference>
<dbReference type="RefSeq" id="NP_293946.1">
    <property type="nucleotide sequence ID" value="NC_001263.1"/>
</dbReference>
<dbReference type="RefSeq" id="WP_010886868.1">
    <property type="nucleotide sequence ID" value="NC_001263.1"/>
</dbReference>
<dbReference type="SMR" id="Q9RXT4"/>
<dbReference type="FunCoup" id="Q9RXT4">
    <property type="interactions" value="429"/>
</dbReference>
<dbReference type="STRING" id="243230.DR_0222"/>
<dbReference type="PaxDb" id="243230-DR_0222"/>
<dbReference type="EnsemblBacteria" id="AAF09808">
    <property type="protein sequence ID" value="AAF09808"/>
    <property type="gene ID" value="DR_0222"/>
</dbReference>
<dbReference type="GeneID" id="69516453"/>
<dbReference type="KEGG" id="dra:DR_0222"/>
<dbReference type="PATRIC" id="fig|243230.17.peg.386"/>
<dbReference type="eggNOG" id="COG0046">
    <property type="taxonomic scope" value="Bacteria"/>
</dbReference>
<dbReference type="HOGENOM" id="CLU_003100_0_1_0"/>
<dbReference type="InParanoid" id="Q9RXT4"/>
<dbReference type="OrthoDB" id="9804441at2"/>
<dbReference type="UniPathway" id="UPA00074">
    <property type="reaction ID" value="UER00128"/>
</dbReference>
<dbReference type="Proteomes" id="UP000002524">
    <property type="component" value="Chromosome 1"/>
</dbReference>
<dbReference type="GO" id="GO:0005737">
    <property type="term" value="C:cytoplasm"/>
    <property type="evidence" value="ECO:0007669"/>
    <property type="project" value="UniProtKB-SubCell"/>
</dbReference>
<dbReference type="GO" id="GO:0005524">
    <property type="term" value="F:ATP binding"/>
    <property type="evidence" value="ECO:0007669"/>
    <property type="project" value="UniProtKB-UniRule"/>
</dbReference>
<dbReference type="GO" id="GO:0000287">
    <property type="term" value="F:magnesium ion binding"/>
    <property type="evidence" value="ECO:0007669"/>
    <property type="project" value="UniProtKB-UniRule"/>
</dbReference>
<dbReference type="GO" id="GO:0004642">
    <property type="term" value="F:phosphoribosylformylglycinamidine synthase activity"/>
    <property type="evidence" value="ECO:0000318"/>
    <property type="project" value="GO_Central"/>
</dbReference>
<dbReference type="GO" id="GO:0006189">
    <property type="term" value="P:'de novo' IMP biosynthetic process"/>
    <property type="evidence" value="ECO:0007669"/>
    <property type="project" value="UniProtKB-UniRule"/>
</dbReference>
<dbReference type="GO" id="GO:0006164">
    <property type="term" value="P:purine nucleotide biosynthetic process"/>
    <property type="evidence" value="ECO:0000318"/>
    <property type="project" value="GO_Central"/>
</dbReference>
<dbReference type="CDD" id="cd02203">
    <property type="entry name" value="PurL_repeat1"/>
    <property type="match status" value="1"/>
</dbReference>
<dbReference type="CDD" id="cd02204">
    <property type="entry name" value="PurL_repeat2"/>
    <property type="match status" value="1"/>
</dbReference>
<dbReference type="FunFam" id="3.30.1330.10:FF:000004">
    <property type="entry name" value="Phosphoribosylformylglycinamidine synthase subunit PurL"/>
    <property type="match status" value="1"/>
</dbReference>
<dbReference type="Gene3D" id="3.90.650.10">
    <property type="entry name" value="PurM-like C-terminal domain"/>
    <property type="match status" value="2"/>
</dbReference>
<dbReference type="Gene3D" id="3.30.1330.10">
    <property type="entry name" value="PurM-like, N-terminal domain"/>
    <property type="match status" value="2"/>
</dbReference>
<dbReference type="HAMAP" id="MF_00420">
    <property type="entry name" value="PurL_2"/>
    <property type="match status" value="1"/>
</dbReference>
<dbReference type="InterPro" id="IPR010074">
    <property type="entry name" value="PRibForGlyAmidine_synth_PurL"/>
</dbReference>
<dbReference type="InterPro" id="IPR041609">
    <property type="entry name" value="PurL_linker"/>
</dbReference>
<dbReference type="InterPro" id="IPR010918">
    <property type="entry name" value="PurM-like_C_dom"/>
</dbReference>
<dbReference type="InterPro" id="IPR036676">
    <property type="entry name" value="PurM-like_C_sf"/>
</dbReference>
<dbReference type="InterPro" id="IPR016188">
    <property type="entry name" value="PurM-like_N"/>
</dbReference>
<dbReference type="InterPro" id="IPR036921">
    <property type="entry name" value="PurM-like_N_sf"/>
</dbReference>
<dbReference type="NCBIfam" id="TIGR01736">
    <property type="entry name" value="FGAM_synth_II"/>
    <property type="match status" value="1"/>
</dbReference>
<dbReference type="NCBIfam" id="NF002290">
    <property type="entry name" value="PRK01213.1"/>
    <property type="match status" value="1"/>
</dbReference>
<dbReference type="PANTHER" id="PTHR43555">
    <property type="entry name" value="PHOSPHORIBOSYLFORMYLGLYCINAMIDINE SYNTHASE SUBUNIT PURL"/>
    <property type="match status" value="1"/>
</dbReference>
<dbReference type="PANTHER" id="PTHR43555:SF1">
    <property type="entry name" value="PHOSPHORIBOSYLFORMYLGLYCINAMIDINE SYNTHASE SUBUNIT PURL"/>
    <property type="match status" value="1"/>
</dbReference>
<dbReference type="Pfam" id="PF00586">
    <property type="entry name" value="AIRS"/>
    <property type="match status" value="2"/>
</dbReference>
<dbReference type="Pfam" id="PF02769">
    <property type="entry name" value="AIRS_C"/>
    <property type="match status" value="2"/>
</dbReference>
<dbReference type="Pfam" id="PF18072">
    <property type="entry name" value="FGAR-AT_linker"/>
    <property type="match status" value="1"/>
</dbReference>
<dbReference type="PIRSF" id="PIRSF001587">
    <property type="entry name" value="FGAM_synthase_II"/>
    <property type="match status" value="1"/>
</dbReference>
<dbReference type="SUPFAM" id="SSF56042">
    <property type="entry name" value="PurM C-terminal domain-like"/>
    <property type="match status" value="2"/>
</dbReference>
<dbReference type="SUPFAM" id="SSF55326">
    <property type="entry name" value="PurM N-terminal domain-like"/>
    <property type="match status" value="2"/>
</dbReference>
<keyword id="KW-0067">ATP-binding</keyword>
<keyword id="KW-0963">Cytoplasm</keyword>
<keyword id="KW-0436">Ligase</keyword>
<keyword id="KW-0460">Magnesium</keyword>
<keyword id="KW-0479">Metal-binding</keyword>
<keyword id="KW-0547">Nucleotide-binding</keyword>
<keyword id="KW-0658">Purine biosynthesis</keyword>
<keyword id="KW-1185">Reference proteome</keyword>
<organism>
    <name type="scientific">Deinococcus radiodurans (strain ATCC 13939 / DSM 20539 / JCM 16871 / CCUG 27074 / LMG 4051 / NBRC 15346 / NCIMB 9279 / VKM B-1422 / R1)</name>
    <dbReference type="NCBI Taxonomy" id="243230"/>
    <lineage>
        <taxon>Bacteria</taxon>
        <taxon>Thermotogati</taxon>
        <taxon>Deinococcota</taxon>
        <taxon>Deinococci</taxon>
        <taxon>Deinococcales</taxon>
        <taxon>Deinococcaceae</taxon>
        <taxon>Deinococcus</taxon>
    </lineage>
</organism>
<sequence>MTSQSLRDQAATFGLTTEEYDLFVSQLGREPNALEAAIVGAMWSEHCGYKNSRPLFRAFPTTGPQVLQGPGENAGVVDIGDGWGVAFKMESHNHPSAVEPVQGAATGVGGILRDIFAMGARPFAVLDSLRFGNPDSPRTRFLVNGVVDGIAHYGNAIGVPTVGGEVTFHPSYQENPLVNVMALGLLRHEDLATGTMGEVGNQIVYVGSKTGRDGLGGAVFSSADLSAASQADRPAVQVGDPFMEKLLLEATLEAIQAGLVAGVQDMGAAGLVSSTCEMAYRASLGITMDLDKVPTREEGMVPMELCLSESQERMILVPVPGKEQALHDLLAKWELDVVTIGEVEAHDRYRLTWKGEVVCDLPVALLNEAPKYTREGVESADIRAARERDLSGVPLPGDLGAVLLELLSHPTIASKRPIFERYDHQVMTNTVVVPGAADAAVLRVKGSPMGVAATSDCNPRFVQLDPYAGAAAAVAEAARNLACVGATPLAITDNLNFGNPHRPEVYYQLQQAVQGIADACRALNTPVTGGNVSLYNQYTEGDHKVAIHPTPTIGMVGVLPDVTVRASLNLKAAGQTLLLLGHRAEKGWSDSIGASQYLETVHGLEAGQVPPVDLDLAQKVVDGTLALIRAGLTDTAHDCAEGGLAVALAEMAIAGGLGLNVSLDAPASVRADALLFGEAHSRVIVAVEDAAAAGAKLDELGLPYAVLGETVEAPKVTIAAPAQHVHLSVNLESLKTAWEEPLKGILG</sequence>
<name>PURL_DEIRA</name>
<gene>
    <name evidence="1" type="primary">purL</name>
    <name type="ordered locus">DR_0222</name>
</gene>
<evidence type="ECO:0000255" key="1">
    <source>
        <dbReference type="HAMAP-Rule" id="MF_00420"/>
    </source>
</evidence>
<feature type="chain" id="PRO_0000100453" description="Phosphoribosylformylglycinamidine synthase subunit PurL">
    <location>
        <begin position="1"/>
        <end position="747"/>
    </location>
</feature>
<feature type="active site" evidence="1">
    <location>
        <position position="46"/>
    </location>
</feature>
<feature type="active site" description="Proton acceptor" evidence="1">
    <location>
        <position position="92"/>
    </location>
</feature>
<feature type="binding site" evidence="1">
    <location>
        <position position="49"/>
    </location>
    <ligand>
        <name>ATP</name>
        <dbReference type="ChEBI" id="CHEBI:30616"/>
    </ligand>
</feature>
<feature type="binding site" evidence="1">
    <location>
        <position position="88"/>
    </location>
    <ligand>
        <name>ATP</name>
        <dbReference type="ChEBI" id="CHEBI:30616"/>
    </ligand>
</feature>
<feature type="binding site" evidence="1">
    <location>
        <position position="90"/>
    </location>
    <ligand>
        <name>Mg(2+)</name>
        <dbReference type="ChEBI" id="CHEBI:18420"/>
        <label>1</label>
    </ligand>
</feature>
<feature type="binding site" evidence="1">
    <location>
        <begin position="91"/>
        <end position="94"/>
    </location>
    <ligand>
        <name>substrate</name>
    </ligand>
</feature>
<feature type="binding site" evidence="1">
    <location>
        <position position="113"/>
    </location>
    <ligand>
        <name>substrate</name>
    </ligand>
</feature>
<feature type="binding site" evidence="1">
    <location>
        <position position="114"/>
    </location>
    <ligand>
        <name>Mg(2+)</name>
        <dbReference type="ChEBI" id="CHEBI:18420"/>
        <label>2</label>
    </ligand>
</feature>
<feature type="binding site" evidence="1">
    <location>
        <position position="237"/>
    </location>
    <ligand>
        <name>substrate</name>
    </ligand>
</feature>
<feature type="binding site" evidence="1">
    <location>
        <position position="265"/>
    </location>
    <ligand>
        <name>Mg(2+)</name>
        <dbReference type="ChEBI" id="CHEBI:18420"/>
        <label>2</label>
    </ligand>
</feature>
<feature type="binding site" evidence="1">
    <location>
        <begin position="309"/>
        <end position="311"/>
    </location>
    <ligand>
        <name>substrate</name>
    </ligand>
</feature>
<feature type="binding site" evidence="1">
    <location>
        <position position="493"/>
    </location>
    <ligand>
        <name>ATP</name>
        <dbReference type="ChEBI" id="CHEBI:30616"/>
    </ligand>
</feature>
<feature type="binding site" evidence="1">
    <location>
        <position position="530"/>
    </location>
    <ligand>
        <name>ATP</name>
        <dbReference type="ChEBI" id="CHEBI:30616"/>
    </ligand>
</feature>
<feature type="binding site" evidence="1">
    <location>
        <position position="531"/>
    </location>
    <ligand>
        <name>Mg(2+)</name>
        <dbReference type="ChEBI" id="CHEBI:18420"/>
        <label>1</label>
    </ligand>
</feature>
<feature type="binding site" evidence="1">
    <location>
        <position position="533"/>
    </location>
    <ligand>
        <name>substrate</name>
    </ligand>
</feature>
<reference key="1">
    <citation type="journal article" date="1999" name="Science">
        <title>Genome sequence of the radioresistant bacterium Deinococcus radiodurans R1.</title>
        <authorList>
            <person name="White O."/>
            <person name="Eisen J.A."/>
            <person name="Heidelberg J.F."/>
            <person name="Hickey E.K."/>
            <person name="Peterson J.D."/>
            <person name="Dodson R.J."/>
            <person name="Haft D.H."/>
            <person name="Gwinn M.L."/>
            <person name="Nelson W.C."/>
            <person name="Richardson D.L."/>
            <person name="Moffat K.S."/>
            <person name="Qin H."/>
            <person name="Jiang L."/>
            <person name="Pamphile W."/>
            <person name="Crosby M."/>
            <person name="Shen M."/>
            <person name="Vamathevan J.J."/>
            <person name="Lam P."/>
            <person name="McDonald L.A."/>
            <person name="Utterback T.R."/>
            <person name="Zalewski C."/>
            <person name="Makarova K.S."/>
            <person name="Aravind L."/>
            <person name="Daly M.J."/>
            <person name="Minton K.W."/>
            <person name="Fleischmann R.D."/>
            <person name="Ketchum K.A."/>
            <person name="Nelson K.E."/>
            <person name="Salzberg S.L."/>
            <person name="Smith H.O."/>
            <person name="Venter J.C."/>
            <person name="Fraser C.M."/>
        </authorList>
    </citation>
    <scope>NUCLEOTIDE SEQUENCE [LARGE SCALE GENOMIC DNA]</scope>
    <source>
        <strain>ATCC 13939 / DSM 20539 / JCM 16871 / CCUG 27074 / LMG 4051 / NBRC 15346 / NCIMB 9279 / VKM B-1422 / R1</strain>
    </source>
</reference>